<sequence length="180" mass="20047">MSKKKAEDKQPIIKDEAVEEPKSDSKVNALSAKIAELQQQLDDSQNDYLRAQAEIQNMQKRSQKEQSALAKYGAQRLAKEVVPVMDDLKRALQVQVDNDSGQQLKTGIEMVYKHLEKALNDNDIKEIDADGVAFDPELHQAVQTVPADDDHPADTVVQVLQSGYKLADRVLRPAMVVVAQ</sequence>
<organism>
    <name type="scientific">Fructilactobacillus sanfranciscensis</name>
    <name type="common">Lactobacillus sanfranciscensis</name>
    <dbReference type="NCBI Taxonomy" id="1625"/>
    <lineage>
        <taxon>Bacteria</taxon>
        <taxon>Bacillati</taxon>
        <taxon>Bacillota</taxon>
        <taxon>Bacilli</taxon>
        <taxon>Lactobacillales</taxon>
        <taxon>Lactobacillaceae</taxon>
        <taxon>Fructilactobacillus</taxon>
    </lineage>
</organism>
<reference key="1">
    <citation type="submission" date="2001-07" db="EMBL/GenBank/DDBJ databases">
        <title>Identification and characterization of the dnak operon of Lactobacillus sanfranciscensis.</title>
        <authorList>
            <person name="Ehrmann M.A."/>
        </authorList>
    </citation>
    <scope>NUCLEOTIDE SEQUENCE [GENOMIC DNA]</scope>
    <source>
        <strain>ATCC 27651 / DSM 20451 / JCM 5668 / KCTC 3205 / NCIMB 702811 / NRRL B-3934 / L-12</strain>
    </source>
</reference>
<protein>
    <recommendedName>
        <fullName evidence="1">Protein GrpE</fullName>
    </recommendedName>
    <alternativeName>
        <fullName evidence="1">HSP-70 cofactor</fullName>
    </alternativeName>
</protein>
<comment type="function">
    <text evidence="1">Participates actively in the response to hyperosmotic and heat shock by preventing the aggregation of stress-denatured proteins, in association with DnaK and GrpE. It is the nucleotide exchange factor for DnaK and may function as a thermosensor. Unfolded proteins bind initially to DnaJ; upon interaction with the DnaJ-bound protein, DnaK hydrolyzes its bound ATP, resulting in the formation of a stable complex. GrpE releases ADP from DnaK; ATP binding to DnaK triggers the release of the substrate protein, thus completing the reaction cycle. Several rounds of ATP-dependent interactions between DnaJ, DnaK and GrpE are required for fully efficient folding.</text>
</comment>
<comment type="subunit">
    <text evidence="1">Homodimer.</text>
</comment>
<comment type="subcellular location">
    <subcellularLocation>
        <location evidence="1">Cytoplasm</location>
    </subcellularLocation>
</comment>
<comment type="similarity">
    <text evidence="1">Belongs to the GrpE family.</text>
</comment>
<accession>Q8KML7</accession>
<evidence type="ECO:0000255" key="1">
    <source>
        <dbReference type="HAMAP-Rule" id="MF_01151"/>
    </source>
</evidence>
<evidence type="ECO:0000256" key="2">
    <source>
        <dbReference type="SAM" id="MobiDB-lite"/>
    </source>
</evidence>
<dbReference type="EMBL" id="AJ315381">
    <property type="protein sequence ID" value="CAC86404.1"/>
    <property type="molecule type" value="Genomic_DNA"/>
</dbReference>
<dbReference type="RefSeq" id="WP_056957853.1">
    <property type="nucleotide sequence ID" value="NZ_QRFO01000001.1"/>
</dbReference>
<dbReference type="SMR" id="Q8KML7"/>
<dbReference type="GO" id="GO:0005737">
    <property type="term" value="C:cytoplasm"/>
    <property type="evidence" value="ECO:0007669"/>
    <property type="project" value="UniProtKB-SubCell"/>
</dbReference>
<dbReference type="GO" id="GO:0000774">
    <property type="term" value="F:adenyl-nucleotide exchange factor activity"/>
    <property type="evidence" value="ECO:0007669"/>
    <property type="project" value="InterPro"/>
</dbReference>
<dbReference type="GO" id="GO:0042803">
    <property type="term" value="F:protein homodimerization activity"/>
    <property type="evidence" value="ECO:0007669"/>
    <property type="project" value="InterPro"/>
</dbReference>
<dbReference type="GO" id="GO:0051087">
    <property type="term" value="F:protein-folding chaperone binding"/>
    <property type="evidence" value="ECO:0007669"/>
    <property type="project" value="InterPro"/>
</dbReference>
<dbReference type="GO" id="GO:0051082">
    <property type="term" value="F:unfolded protein binding"/>
    <property type="evidence" value="ECO:0007669"/>
    <property type="project" value="TreeGrafter"/>
</dbReference>
<dbReference type="GO" id="GO:0006457">
    <property type="term" value="P:protein folding"/>
    <property type="evidence" value="ECO:0007669"/>
    <property type="project" value="InterPro"/>
</dbReference>
<dbReference type="CDD" id="cd00446">
    <property type="entry name" value="GrpE"/>
    <property type="match status" value="1"/>
</dbReference>
<dbReference type="FunFam" id="2.30.22.10:FF:000001">
    <property type="entry name" value="Protein GrpE"/>
    <property type="match status" value="1"/>
</dbReference>
<dbReference type="Gene3D" id="3.90.20.20">
    <property type="match status" value="1"/>
</dbReference>
<dbReference type="Gene3D" id="2.30.22.10">
    <property type="entry name" value="Head domain of nucleotide exchange factor GrpE"/>
    <property type="match status" value="1"/>
</dbReference>
<dbReference type="HAMAP" id="MF_01151">
    <property type="entry name" value="GrpE"/>
    <property type="match status" value="1"/>
</dbReference>
<dbReference type="InterPro" id="IPR000740">
    <property type="entry name" value="GrpE"/>
</dbReference>
<dbReference type="InterPro" id="IPR013805">
    <property type="entry name" value="GrpE_coiled_coil"/>
</dbReference>
<dbReference type="InterPro" id="IPR009012">
    <property type="entry name" value="GrpE_head"/>
</dbReference>
<dbReference type="NCBIfam" id="NF010738">
    <property type="entry name" value="PRK14140.1"/>
    <property type="match status" value="1"/>
</dbReference>
<dbReference type="NCBIfam" id="NF010759">
    <property type="entry name" value="PRK14162.1"/>
    <property type="match status" value="1"/>
</dbReference>
<dbReference type="PANTHER" id="PTHR21237">
    <property type="entry name" value="GRPE PROTEIN"/>
    <property type="match status" value="1"/>
</dbReference>
<dbReference type="PANTHER" id="PTHR21237:SF23">
    <property type="entry name" value="GRPE PROTEIN HOMOLOG, MITOCHONDRIAL"/>
    <property type="match status" value="1"/>
</dbReference>
<dbReference type="Pfam" id="PF01025">
    <property type="entry name" value="GrpE"/>
    <property type="match status" value="1"/>
</dbReference>
<dbReference type="PRINTS" id="PR00773">
    <property type="entry name" value="GRPEPROTEIN"/>
</dbReference>
<dbReference type="SUPFAM" id="SSF58014">
    <property type="entry name" value="Coiled-coil domain of nucleotide exchange factor GrpE"/>
    <property type="match status" value="1"/>
</dbReference>
<dbReference type="SUPFAM" id="SSF51064">
    <property type="entry name" value="Head domain of nucleotide exchange factor GrpE"/>
    <property type="match status" value="1"/>
</dbReference>
<dbReference type="PROSITE" id="PS01071">
    <property type="entry name" value="GRPE"/>
    <property type="match status" value="1"/>
</dbReference>
<gene>
    <name evidence="1" type="primary">grpE</name>
</gene>
<feature type="chain" id="PRO_0000113803" description="Protein GrpE">
    <location>
        <begin position="1"/>
        <end position="180"/>
    </location>
</feature>
<feature type="region of interest" description="Disordered" evidence="2">
    <location>
        <begin position="1"/>
        <end position="25"/>
    </location>
</feature>
<name>GRPE_FRUSA</name>
<keyword id="KW-0143">Chaperone</keyword>
<keyword id="KW-0963">Cytoplasm</keyword>
<keyword id="KW-0346">Stress response</keyword>
<proteinExistence type="inferred from homology"/>